<feature type="chain" id="PRO_1000062486" description="Protein-export protein SecB">
    <location>
        <begin position="1"/>
        <end position="160"/>
    </location>
</feature>
<protein>
    <recommendedName>
        <fullName evidence="1">Protein-export protein SecB</fullName>
    </recommendedName>
</protein>
<organism>
    <name type="scientific">Nitrosomonas eutropha (strain DSM 101675 / C91 / Nm57)</name>
    <dbReference type="NCBI Taxonomy" id="335283"/>
    <lineage>
        <taxon>Bacteria</taxon>
        <taxon>Pseudomonadati</taxon>
        <taxon>Pseudomonadota</taxon>
        <taxon>Betaproteobacteria</taxon>
        <taxon>Nitrosomonadales</taxon>
        <taxon>Nitrosomonadaceae</taxon>
        <taxon>Nitrosomonas</taxon>
    </lineage>
</organism>
<evidence type="ECO:0000255" key="1">
    <source>
        <dbReference type="HAMAP-Rule" id="MF_00821"/>
    </source>
</evidence>
<sequence>MTEPQQQPVFVIEKVYVKDLSLEIPHAPQVFLERESPEINLQLATSDNVIEGEIHEVIVTATVTARLKEKDKVMFLVEAHQAGIFRIRNVPGNEIEPVLGVLCPNILFPYLRETISDTVTRAGFPPVILNPVNFEAIYQQKQQEAAVSQPDQPVDNTTRH</sequence>
<proteinExistence type="inferred from homology"/>
<keyword id="KW-0143">Chaperone</keyword>
<keyword id="KW-0963">Cytoplasm</keyword>
<keyword id="KW-0653">Protein transport</keyword>
<keyword id="KW-0811">Translocation</keyword>
<keyword id="KW-0813">Transport</keyword>
<gene>
    <name evidence="1" type="primary">secB</name>
    <name type="ordered locus">Neut_0658</name>
</gene>
<name>SECB_NITEC</name>
<dbReference type="EMBL" id="CP000450">
    <property type="protein sequence ID" value="ABI58930.1"/>
    <property type="molecule type" value="Genomic_DNA"/>
</dbReference>
<dbReference type="RefSeq" id="WP_011633771.1">
    <property type="nucleotide sequence ID" value="NC_008344.1"/>
</dbReference>
<dbReference type="SMR" id="Q0AIA2"/>
<dbReference type="STRING" id="335283.Neut_0658"/>
<dbReference type="KEGG" id="net:Neut_0658"/>
<dbReference type="eggNOG" id="COG1952">
    <property type="taxonomic scope" value="Bacteria"/>
</dbReference>
<dbReference type="HOGENOM" id="CLU_111574_1_0_4"/>
<dbReference type="OrthoDB" id="9795145at2"/>
<dbReference type="Proteomes" id="UP000001966">
    <property type="component" value="Chromosome"/>
</dbReference>
<dbReference type="GO" id="GO:0005737">
    <property type="term" value="C:cytoplasm"/>
    <property type="evidence" value="ECO:0007669"/>
    <property type="project" value="UniProtKB-SubCell"/>
</dbReference>
<dbReference type="GO" id="GO:0051082">
    <property type="term" value="F:unfolded protein binding"/>
    <property type="evidence" value="ECO:0007669"/>
    <property type="project" value="InterPro"/>
</dbReference>
<dbReference type="GO" id="GO:0006457">
    <property type="term" value="P:protein folding"/>
    <property type="evidence" value="ECO:0007669"/>
    <property type="project" value="UniProtKB-UniRule"/>
</dbReference>
<dbReference type="GO" id="GO:0051262">
    <property type="term" value="P:protein tetramerization"/>
    <property type="evidence" value="ECO:0007669"/>
    <property type="project" value="InterPro"/>
</dbReference>
<dbReference type="GO" id="GO:0015031">
    <property type="term" value="P:protein transport"/>
    <property type="evidence" value="ECO:0007669"/>
    <property type="project" value="UniProtKB-UniRule"/>
</dbReference>
<dbReference type="Gene3D" id="3.10.420.10">
    <property type="entry name" value="SecB-like"/>
    <property type="match status" value="1"/>
</dbReference>
<dbReference type="HAMAP" id="MF_00821">
    <property type="entry name" value="SecB"/>
    <property type="match status" value="1"/>
</dbReference>
<dbReference type="InterPro" id="IPR003708">
    <property type="entry name" value="SecB"/>
</dbReference>
<dbReference type="InterPro" id="IPR035958">
    <property type="entry name" value="SecB-like_sf"/>
</dbReference>
<dbReference type="NCBIfam" id="NF004394">
    <property type="entry name" value="PRK05751.1-5"/>
    <property type="match status" value="1"/>
</dbReference>
<dbReference type="NCBIfam" id="TIGR00809">
    <property type="entry name" value="secB"/>
    <property type="match status" value="1"/>
</dbReference>
<dbReference type="PANTHER" id="PTHR36918">
    <property type="match status" value="1"/>
</dbReference>
<dbReference type="PANTHER" id="PTHR36918:SF1">
    <property type="entry name" value="PROTEIN-EXPORT PROTEIN SECB"/>
    <property type="match status" value="1"/>
</dbReference>
<dbReference type="Pfam" id="PF02556">
    <property type="entry name" value="SecB"/>
    <property type="match status" value="1"/>
</dbReference>
<dbReference type="PRINTS" id="PR01594">
    <property type="entry name" value="SECBCHAPRONE"/>
</dbReference>
<dbReference type="SUPFAM" id="SSF54611">
    <property type="entry name" value="SecB-like"/>
    <property type="match status" value="1"/>
</dbReference>
<accession>Q0AIA2</accession>
<reference key="1">
    <citation type="journal article" date="2007" name="Environ. Microbiol.">
        <title>Whole-genome analysis of the ammonia-oxidizing bacterium, Nitrosomonas eutropha C91: implications for niche adaptation.</title>
        <authorList>
            <person name="Stein L.Y."/>
            <person name="Arp D.J."/>
            <person name="Berube P.M."/>
            <person name="Chain P.S."/>
            <person name="Hauser L."/>
            <person name="Jetten M.S."/>
            <person name="Klotz M.G."/>
            <person name="Larimer F.W."/>
            <person name="Norton J.M."/>
            <person name="Op den Camp H.J.M."/>
            <person name="Shin M."/>
            <person name="Wei X."/>
        </authorList>
    </citation>
    <scope>NUCLEOTIDE SEQUENCE [LARGE SCALE GENOMIC DNA]</scope>
    <source>
        <strain>DSM 101675 / C91 / Nm57</strain>
    </source>
</reference>
<comment type="function">
    <text evidence="1">One of the proteins required for the normal export of preproteins out of the cell cytoplasm. It is a molecular chaperone that binds to a subset of precursor proteins, maintaining them in a translocation-competent state. It also specifically binds to its receptor SecA.</text>
</comment>
<comment type="subunit">
    <text evidence="1">Homotetramer, a dimer of dimers. One homotetramer interacts with 1 SecA dimer.</text>
</comment>
<comment type="subcellular location">
    <subcellularLocation>
        <location evidence="1">Cytoplasm</location>
    </subcellularLocation>
</comment>
<comment type="similarity">
    <text evidence="1">Belongs to the SecB family.</text>
</comment>